<feature type="chain" id="PRO_0000230914" description="Glucose-6-phosphate isomerase">
    <location>
        <begin position="1"/>
        <end position="540"/>
    </location>
</feature>
<feature type="active site" description="Proton donor" evidence="1">
    <location>
        <position position="350"/>
    </location>
</feature>
<feature type="active site" evidence="1">
    <location>
        <position position="381"/>
    </location>
</feature>
<feature type="active site" evidence="1">
    <location>
        <position position="503"/>
    </location>
</feature>
<reference key="1">
    <citation type="submission" date="2005-10" db="EMBL/GenBank/DDBJ databases">
        <title>Complete sequence of chromosome 1 of Burkholderia sp. 383.</title>
        <authorList>
            <consortium name="US DOE Joint Genome Institute"/>
            <person name="Copeland A."/>
            <person name="Lucas S."/>
            <person name="Lapidus A."/>
            <person name="Barry K."/>
            <person name="Detter J.C."/>
            <person name="Glavina T."/>
            <person name="Hammon N."/>
            <person name="Israni S."/>
            <person name="Pitluck S."/>
            <person name="Chain P."/>
            <person name="Malfatti S."/>
            <person name="Shin M."/>
            <person name="Vergez L."/>
            <person name="Schmutz J."/>
            <person name="Larimer F."/>
            <person name="Land M."/>
            <person name="Kyrpides N."/>
            <person name="Lykidis A."/>
            <person name="Richardson P."/>
        </authorList>
    </citation>
    <scope>NUCLEOTIDE SEQUENCE [LARGE SCALE GENOMIC DNA]</scope>
    <source>
        <strain>ATCC 17760 / DSM 23089 / LMG 22485 / NCIMB 9086 / R18194 / 383</strain>
    </source>
</reference>
<keyword id="KW-0963">Cytoplasm</keyword>
<keyword id="KW-0312">Gluconeogenesis</keyword>
<keyword id="KW-0324">Glycolysis</keyword>
<keyword id="KW-0413">Isomerase</keyword>
<protein>
    <recommendedName>
        <fullName evidence="1">Glucose-6-phosphate isomerase</fullName>
        <shortName evidence="1">GPI</shortName>
        <ecNumber evidence="1">5.3.1.9</ecNumber>
    </recommendedName>
    <alternativeName>
        <fullName evidence="1">Phosphoglucose isomerase</fullName>
        <shortName evidence="1">PGI</shortName>
    </alternativeName>
    <alternativeName>
        <fullName evidence="1">Phosphohexose isomerase</fullName>
        <shortName evidence="1">PHI</shortName>
    </alternativeName>
</protein>
<evidence type="ECO:0000255" key="1">
    <source>
        <dbReference type="HAMAP-Rule" id="MF_00473"/>
    </source>
</evidence>
<evidence type="ECO:0000305" key="2"/>
<proteinExistence type="inferred from homology"/>
<name>G6PI_BURL3</name>
<dbReference type="EC" id="5.3.1.9" evidence="1"/>
<dbReference type="EMBL" id="CP000151">
    <property type="protein sequence ID" value="ABB08812.1"/>
    <property type="status" value="ALT_INIT"/>
    <property type="molecule type" value="Genomic_DNA"/>
</dbReference>
<dbReference type="RefSeq" id="WP_041492870.1">
    <property type="nucleotide sequence ID" value="NC_007510.1"/>
</dbReference>
<dbReference type="SMR" id="Q39FF4"/>
<dbReference type="GeneID" id="45095094"/>
<dbReference type="KEGG" id="bur:Bcep18194_A5218"/>
<dbReference type="PATRIC" id="fig|482957.22.peg.2157"/>
<dbReference type="HOGENOM" id="CLU_017947_3_1_4"/>
<dbReference type="UniPathway" id="UPA00109">
    <property type="reaction ID" value="UER00181"/>
</dbReference>
<dbReference type="UniPathway" id="UPA00138"/>
<dbReference type="Proteomes" id="UP000002705">
    <property type="component" value="Chromosome 1"/>
</dbReference>
<dbReference type="GO" id="GO:0005829">
    <property type="term" value="C:cytosol"/>
    <property type="evidence" value="ECO:0007669"/>
    <property type="project" value="TreeGrafter"/>
</dbReference>
<dbReference type="GO" id="GO:0097367">
    <property type="term" value="F:carbohydrate derivative binding"/>
    <property type="evidence" value="ECO:0007669"/>
    <property type="project" value="InterPro"/>
</dbReference>
<dbReference type="GO" id="GO:0004347">
    <property type="term" value="F:glucose-6-phosphate isomerase activity"/>
    <property type="evidence" value="ECO:0007669"/>
    <property type="project" value="UniProtKB-UniRule"/>
</dbReference>
<dbReference type="GO" id="GO:0048029">
    <property type="term" value="F:monosaccharide binding"/>
    <property type="evidence" value="ECO:0007669"/>
    <property type="project" value="TreeGrafter"/>
</dbReference>
<dbReference type="GO" id="GO:0006094">
    <property type="term" value="P:gluconeogenesis"/>
    <property type="evidence" value="ECO:0007669"/>
    <property type="project" value="UniProtKB-UniRule"/>
</dbReference>
<dbReference type="GO" id="GO:0051156">
    <property type="term" value="P:glucose 6-phosphate metabolic process"/>
    <property type="evidence" value="ECO:0007669"/>
    <property type="project" value="TreeGrafter"/>
</dbReference>
<dbReference type="GO" id="GO:0006096">
    <property type="term" value="P:glycolytic process"/>
    <property type="evidence" value="ECO:0007669"/>
    <property type="project" value="UniProtKB-UniRule"/>
</dbReference>
<dbReference type="CDD" id="cd05015">
    <property type="entry name" value="SIS_PGI_1"/>
    <property type="match status" value="1"/>
</dbReference>
<dbReference type="CDD" id="cd05016">
    <property type="entry name" value="SIS_PGI_2"/>
    <property type="match status" value="1"/>
</dbReference>
<dbReference type="Gene3D" id="1.10.1390.10">
    <property type="match status" value="1"/>
</dbReference>
<dbReference type="Gene3D" id="3.40.50.10490">
    <property type="entry name" value="Glucose-6-phosphate isomerase like protein, domain 1"/>
    <property type="match status" value="2"/>
</dbReference>
<dbReference type="HAMAP" id="MF_00473">
    <property type="entry name" value="G6P_isomerase"/>
    <property type="match status" value="1"/>
</dbReference>
<dbReference type="InterPro" id="IPR001672">
    <property type="entry name" value="G6P_Isomerase"/>
</dbReference>
<dbReference type="InterPro" id="IPR023096">
    <property type="entry name" value="G6P_Isomerase_C"/>
</dbReference>
<dbReference type="InterPro" id="IPR018189">
    <property type="entry name" value="Phosphoglucose_isomerase_CS"/>
</dbReference>
<dbReference type="InterPro" id="IPR046348">
    <property type="entry name" value="SIS_dom_sf"/>
</dbReference>
<dbReference type="InterPro" id="IPR035476">
    <property type="entry name" value="SIS_PGI_1"/>
</dbReference>
<dbReference type="InterPro" id="IPR035482">
    <property type="entry name" value="SIS_PGI_2"/>
</dbReference>
<dbReference type="NCBIfam" id="NF001211">
    <property type="entry name" value="PRK00179.1"/>
    <property type="match status" value="1"/>
</dbReference>
<dbReference type="PANTHER" id="PTHR11469">
    <property type="entry name" value="GLUCOSE-6-PHOSPHATE ISOMERASE"/>
    <property type="match status" value="1"/>
</dbReference>
<dbReference type="PANTHER" id="PTHR11469:SF1">
    <property type="entry name" value="GLUCOSE-6-PHOSPHATE ISOMERASE"/>
    <property type="match status" value="1"/>
</dbReference>
<dbReference type="Pfam" id="PF00342">
    <property type="entry name" value="PGI"/>
    <property type="match status" value="1"/>
</dbReference>
<dbReference type="PRINTS" id="PR00662">
    <property type="entry name" value="G6PISOMERASE"/>
</dbReference>
<dbReference type="SUPFAM" id="SSF53697">
    <property type="entry name" value="SIS domain"/>
    <property type="match status" value="1"/>
</dbReference>
<dbReference type="PROSITE" id="PS00765">
    <property type="entry name" value="P_GLUCOSE_ISOMERASE_1"/>
    <property type="match status" value="1"/>
</dbReference>
<dbReference type="PROSITE" id="PS00174">
    <property type="entry name" value="P_GLUCOSE_ISOMERASE_2"/>
    <property type="match status" value="1"/>
</dbReference>
<dbReference type="PROSITE" id="PS51463">
    <property type="entry name" value="P_GLUCOSE_ISOMERASE_3"/>
    <property type="match status" value="1"/>
</dbReference>
<comment type="function">
    <text evidence="1">Catalyzes the reversible isomerization of glucose-6-phosphate to fructose-6-phosphate.</text>
</comment>
<comment type="catalytic activity">
    <reaction evidence="1">
        <text>alpha-D-glucose 6-phosphate = beta-D-fructose 6-phosphate</text>
        <dbReference type="Rhea" id="RHEA:11816"/>
        <dbReference type="ChEBI" id="CHEBI:57634"/>
        <dbReference type="ChEBI" id="CHEBI:58225"/>
        <dbReference type="EC" id="5.3.1.9"/>
    </reaction>
</comment>
<comment type="pathway">
    <text evidence="1">Carbohydrate biosynthesis; gluconeogenesis.</text>
</comment>
<comment type="pathway">
    <text evidence="1">Carbohydrate degradation; glycolysis; D-glyceraldehyde 3-phosphate and glycerone phosphate from D-glucose: step 2/4.</text>
</comment>
<comment type="subcellular location">
    <subcellularLocation>
        <location evidence="1">Cytoplasm</location>
    </subcellularLocation>
</comment>
<comment type="similarity">
    <text evidence="1">Belongs to the GPI family.</text>
</comment>
<comment type="sequence caution" evidence="2">
    <conflict type="erroneous initiation">
        <sequence resource="EMBL-CDS" id="ABB08812"/>
    </conflict>
</comment>
<sequence>MTLNSLPAWTALQSHFEQIRHARLRDWFAPENDHTPTRAERFTIPGGGIAADFSKNRINDDTLRLLVQLARDAGVEARRDAMFAGEIVNPTEGRAALHTALRATDPQAPFHAQISAERAKMATFARAVRSGTWTGYTGKRIRHVINIGIGGSDLGPKMVVHALHHVATPEITTHFVSNVDGADLARVLEQVDPEETLAIIVSKTFTTLETMTNARSLRDWFVARGCPEDALAKHFVGVSANPAEVVKFGIAADNVFEMWDWVGGRYSLWSAVGLSIMIAIGPEQFDELLAGANDMDRHFREAPLERNLPVLLGLIGIWYRNFFGSQSYLVAPYSEALHYLPSYLQQLEMESNGKSARLDGTFVDYPTSAVTWGEPGTNGQHAFFQMLHQGPTIVPIDFIAVLTPEHPLASHHPKLLANCFAQSEALMLGRTLDEARKVAGPGKEALAPHLTFPGNRPTTTLLVDALTPRTLGALIALYEHKVLVQATVWDINPFDQWGVELGKILGKVVEADLSAESIDPAKHDSSTTALIERARAALKR</sequence>
<accession>Q39FF4</accession>
<organism>
    <name type="scientific">Burkholderia lata (strain ATCC 17760 / DSM 23089 / LMG 22485 / NCIMB 9086 / R18194 / 383)</name>
    <dbReference type="NCBI Taxonomy" id="482957"/>
    <lineage>
        <taxon>Bacteria</taxon>
        <taxon>Pseudomonadati</taxon>
        <taxon>Pseudomonadota</taxon>
        <taxon>Betaproteobacteria</taxon>
        <taxon>Burkholderiales</taxon>
        <taxon>Burkholderiaceae</taxon>
        <taxon>Burkholderia</taxon>
        <taxon>Burkholderia cepacia complex</taxon>
    </lineage>
</organism>
<gene>
    <name evidence="1" type="primary">pgi</name>
    <name type="ordered locus">Bcep18194_A5218</name>
</gene>